<feature type="chain" id="PRO_0000188228" description="ATP synthase epsilon chain">
    <location>
        <begin position="1"/>
        <end position="137"/>
    </location>
</feature>
<name>ATPE_SYNE7</name>
<keyword id="KW-0066">ATP synthesis</keyword>
<keyword id="KW-0139">CF(1)</keyword>
<keyword id="KW-0375">Hydrogen ion transport</keyword>
<keyword id="KW-0406">Ion transport</keyword>
<keyword id="KW-0472">Membrane</keyword>
<keyword id="KW-1185">Reference proteome</keyword>
<keyword id="KW-0793">Thylakoid</keyword>
<keyword id="KW-0813">Transport</keyword>
<comment type="function">
    <text evidence="1">Produces ATP from ADP in the presence of a proton gradient across the membrane.</text>
</comment>
<comment type="subunit">
    <text>F-type ATPases have 2 components, CF(1) - the catalytic core - and CF(0) - the membrane proton channel. CF(1) has five subunits: alpha(3), beta(3), gamma(1), delta(1), epsilon(1). CF(0) has three main subunits: a, b and c.</text>
</comment>
<comment type="subcellular location">
    <subcellularLocation>
        <location evidence="1">Cellular thylakoid membrane</location>
        <topology evidence="1">Peripheral membrane protein</topology>
    </subcellularLocation>
</comment>
<comment type="similarity">
    <text evidence="2">Belongs to the ATPase epsilon chain family.</text>
</comment>
<accession>P0A2Z8</accession>
<accession>P07892</accession>
<accession>P37373</accession>
<accession>Q31KS3</accession>
<proteinExistence type="inferred from homology"/>
<organism>
    <name type="scientific">Synechococcus elongatus (strain ATCC 33912 / PCC 7942 / FACHB-805)</name>
    <name type="common">Anacystis nidulans R2</name>
    <dbReference type="NCBI Taxonomy" id="1140"/>
    <lineage>
        <taxon>Bacteria</taxon>
        <taxon>Bacillati</taxon>
        <taxon>Cyanobacteriota</taxon>
        <taxon>Cyanophyceae</taxon>
        <taxon>Synechococcales</taxon>
        <taxon>Synechococcaceae</taxon>
        <taxon>Synechococcus</taxon>
    </lineage>
</organism>
<evidence type="ECO:0000250" key="1"/>
<evidence type="ECO:0000305" key="2"/>
<reference key="1">
    <citation type="journal article" date="1994" name="Proc. Natl. Acad. Sci. U.S.A.">
        <title>P-type ATPase from the cyanobacterium Synechococcus 7942 related to the human Menkes and Wilson disease gene products.</title>
        <authorList>
            <person name="Phung L.T."/>
            <person name="Ajlani G."/>
            <person name="Haselkorn R."/>
        </authorList>
    </citation>
    <scope>NUCLEOTIDE SEQUENCE [GENOMIC DNA]</scope>
</reference>
<reference key="2">
    <citation type="submission" date="2005-08" db="EMBL/GenBank/DDBJ databases">
        <title>Complete sequence of chromosome 1 of Synechococcus elongatus PCC 7942.</title>
        <authorList>
            <consortium name="US DOE Joint Genome Institute"/>
            <person name="Copeland A."/>
            <person name="Lucas S."/>
            <person name="Lapidus A."/>
            <person name="Barry K."/>
            <person name="Detter J.C."/>
            <person name="Glavina T."/>
            <person name="Hammon N."/>
            <person name="Israni S."/>
            <person name="Pitluck S."/>
            <person name="Schmutz J."/>
            <person name="Larimer F."/>
            <person name="Land M."/>
            <person name="Kyrpides N."/>
            <person name="Lykidis A."/>
            <person name="Golden S."/>
            <person name="Richardson P."/>
        </authorList>
    </citation>
    <scope>NUCLEOTIDE SEQUENCE [LARGE SCALE GENOMIC DNA]</scope>
    <source>
        <strain>ATCC 33912 / PCC 7942 / FACHB-805</strain>
    </source>
</reference>
<protein>
    <recommendedName>
        <fullName>ATP synthase epsilon chain</fullName>
    </recommendedName>
    <alternativeName>
        <fullName>ATP synthase F1 sector epsilon subunit</fullName>
    </alternativeName>
    <alternativeName>
        <fullName>F-ATPase epsilon subunit</fullName>
    </alternativeName>
</protein>
<dbReference type="EMBL" id="U04356">
    <property type="protein sequence ID" value="AAB82021.1"/>
    <property type="molecule type" value="Genomic_DNA"/>
</dbReference>
<dbReference type="EMBL" id="CP000100">
    <property type="protein sequence ID" value="ABB58346.1"/>
    <property type="molecule type" value="Genomic_DNA"/>
</dbReference>
<dbReference type="RefSeq" id="WP_011244096.1">
    <property type="nucleotide sequence ID" value="NZ_JACJTX010000001.1"/>
</dbReference>
<dbReference type="SMR" id="P0A2Z8"/>
<dbReference type="STRING" id="1140.Synpcc7942_2316"/>
<dbReference type="PaxDb" id="1140-Synpcc7942_2316"/>
<dbReference type="GeneID" id="72431203"/>
<dbReference type="KEGG" id="syf:Synpcc7942_2316"/>
<dbReference type="eggNOG" id="COG0355">
    <property type="taxonomic scope" value="Bacteria"/>
</dbReference>
<dbReference type="HOGENOM" id="CLU_084338_1_2_3"/>
<dbReference type="OrthoDB" id="9804110at2"/>
<dbReference type="BioCyc" id="MetaCyc:SYNPCC7942_2316-MONOMER"/>
<dbReference type="BioCyc" id="SYNEL:SYNPCC7942_2316-MONOMER"/>
<dbReference type="Proteomes" id="UP000889800">
    <property type="component" value="Chromosome"/>
</dbReference>
<dbReference type="GO" id="GO:0031676">
    <property type="term" value="C:plasma membrane-derived thylakoid membrane"/>
    <property type="evidence" value="ECO:0007669"/>
    <property type="project" value="UniProtKB-SubCell"/>
</dbReference>
<dbReference type="GO" id="GO:0045259">
    <property type="term" value="C:proton-transporting ATP synthase complex"/>
    <property type="evidence" value="ECO:0007669"/>
    <property type="project" value="UniProtKB-KW"/>
</dbReference>
<dbReference type="GO" id="GO:0005524">
    <property type="term" value="F:ATP binding"/>
    <property type="evidence" value="ECO:0007669"/>
    <property type="project" value="UniProtKB-UniRule"/>
</dbReference>
<dbReference type="GO" id="GO:0046933">
    <property type="term" value="F:proton-transporting ATP synthase activity, rotational mechanism"/>
    <property type="evidence" value="ECO:0007669"/>
    <property type="project" value="UniProtKB-UniRule"/>
</dbReference>
<dbReference type="CDD" id="cd12152">
    <property type="entry name" value="F1-ATPase_delta"/>
    <property type="match status" value="1"/>
</dbReference>
<dbReference type="Gene3D" id="2.60.15.10">
    <property type="entry name" value="F0F1 ATP synthase delta/epsilon subunit, N-terminal"/>
    <property type="match status" value="1"/>
</dbReference>
<dbReference type="Gene3D" id="1.10.287.540">
    <property type="entry name" value="Helix hairpin bin"/>
    <property type="match status" value="1"/>
</dbReference>
<dbReference type="HAMAP" id="MF_00530">
    <property type="entry name" value="ATP_synth_epsil_bac"/>
    <property type="match status" value="1"/>
</dbReference>
<dbReference type="InterPro" id="IPR001469">
    <property type="entry name" value="ATP_synth_F1_dsu/esu"/>
</dbReference>
<dbReference type="InterPro" id="IPR020546">
    <property type="entry name" value="ATP_synth_F1_dsu/esu_N"/>
</dbReference>
<dbReference type="InterPro" id="IPR020547">
    <property type="entry name" value="ATP_synth_F1_esu_C"/>
</dbReference>
<dbReference type="InterPro" id="IPR036771">
    <property type="entry name" value="ATPsynth_dsu/esu_N"/>
</dbReference>
<dbReference type="NCBIfam" id="TIGR01216">
    <property type="entry name" value="ATP_synt_epsi"/>
    <property type="match status" value="1"/>
</dbReference>
<dbReference type="NCBIfam" id="NF009977">
    <property type="entry name" value="PRK13442.1"/>
    <property type="match status" value="1"/>
</dbReference>
<dbReference type="PANTHER" id="PTHR13822">
    <property type="entry name" value="ATP SYNTHASE DELTA/EPSILON CHAIN"/>
    <property type="match status" value="1"/>
</dbReference>
<dbReference type="PANTHER" id="PTHR13822:SF10">
    <property type="entry name" value="ATP SYNTHASE EPSILON CHAIN, CHLOROPLASTIC"/>
    <property type="match status" value="1"/>
</dbReference>
<dbReference type="Pfam" id="PF00401">
    <property type="entry name" value="ATP-synt_DE"/>
    <property type="match status" value="1"/>
</dbReference>
<dbReference type="Pfam" id="PF02823">
    <property type="entry name" value="ATP-synt_DE_N"/>
    <property type="match status" value="1"/>
</dbReference>
<dbReference type="SUPFAM" id="SSF51344">
    <property type="entry name" value="Epsilon subunit of F1F0-ATP synthase N-terminal domain"/>
    <property type="match status" value="1"/>
</dbReference>
<sequence>MSLTVRVIAPDRTVWDAPAQEVILPSTTGQLGILPGHAPLLSALDTGVLRVRADKEWLAIAVLGGFAEVENNEVTVLVNAAERGDKIDLEEARAAFSQADERLKGVKEDDRQGKFQATQAYRRARARLQAAGGLVSV</sequence>
<gene>
    <name type="primary">atpC</name>
    <name type="synonym">atpE</name>
    <name type="ordered locus">Synpcc7942_2316</name>
</gene>